<gene>
    <name type="ordered locus">At4g04930</name>
    <name type="ORF">T1J1.1</name>
</gene>
<proteinExistence type="evidence at transcript level"/>
<protein>
    <recommendedName>
        <fullName>Sphingolipid delta(4)-desaturase DES1-like</fullName>
        <ecNumber evidence="4">1.14.19.17</ecNumber>
    </recommendedName>
</protein>
<accession>Q9ZPH4</accession>
<reference key="1">
    <citation type="submission" date="1999-12" db="EMBL/GenBank/DDBJ databases">
        <title>Isolation of an Arabidopsis thaliana cDNA clone encoding a novel transmembrane protein homologous to a Drosophila protein required for the initiation of meiosis in spermatogenesis.</title>
        <authorList>
            <person name="Destefano-Beltran L.J.C."/>
            <person name="Casas-Mollano A."/>
            <person name="Ciavatta V."/>
            <person name="Cairney J."/>
        </authorList>
    </citation>
    <scope>NUCLEOTIDE SEQUENCE [MRNA]</scope>
</reference>
<reference key="2">
    <citation type="journal article" date="1999" name="Nature">
        <title>Sequence and analysis of chromosome 4 of the plant Arabidopsis thaliana.</title>
        <authorList>
            <person name="Mayer K.F.X."/>
            <person name="Schueller C."/>
            <person name="Wambutt R."/>
            <person name="Murphy G."/>
            <person name="Volckaert G."/>
            <person name="Pohl T."/>
            <person name="Duesterhoeft A."/>
            <person name="Stiekema W."/>
            <person name="Entian K.-D."/>
            <person name="Terryn N."/>
            <person name="Harris B."/>
            <person name="Ansorge W."/>
            <person name="Brandt P."/>
            <person name="Grivell L.A."/>
            <person name="Rieger M."/>
            <person name="Weichselgartner M."/>
            <person name="de Simone V."/>
            <person name="Obermaier B."/>
            <person name="Mache R."/>
            <person name="Mueller M."/>
            <person name="Kreis M."/>
            <person name="Delseny M."/>
            <person name="Puigdomenech P."/>
            <person name="Watson M."/>
            <person name="Schmidtheini T."/>
            <person name="Reichert B."/>
            <person name="Portetelle D."/>
            <person name="Perez-Alonso M."/>
            <person name="Boutry M."/>
            <person name="Bancroft I."/>
            <person name="Vos P."/>
            <person name="Hoheisel J."/>
            <person name="Zimmermann W."/>
            <person name="Wedler H."/>
            <person name="Ridley P."/>
            <person name="Langham S.-A."/>
            <person name="McCullagh B."/>
            <person name="Bilham L."/>
            <person name="Robben J."/>
            <person name="van der Schueren J."/>
            <person name="Grymonprez B."/>
            <person name="Chuang Y.-J."/>
            <person name="Vandenbussche F."/>
            <person name="Braeken M."/>
            <person name="Weltjens I."/>
            <person name="Voet M."/>
            <person name="Bastiaens I."/>
            <person name="Aert R."/>
            <person name="Defoor E."/>
            <person name="Weitzenegger T."/>
            <person name="Bothe G."/>
            <person name="Ramsperger U."/>
            <person name="Hilbert H."/>
            <person name="Braun M."/>
            <person name="Holzer E."/>
            <person name="Brandt A."/>
            <person name="Peters S."/>
            <person name="van Staveren M."/>
            <person name="Dirkse W."/>
            <person name="Mooijman P."/>
            <person name="Klein Lankhorst R."/>
            <person name="Rose M."/>
            <person name="Hauf J."/>
            <person name="Koetter P."/>
            <person name="Berneiser S."/>
            <person name="Hempel S."/>
            <person name="Feldpausch M."/>
            <person name="Lamberth S."/>
            <person name="Van den Daele H."/>
            <person name="De Keyser A."/>
            <person name="Buysshaert C."/>
            <person name="Gielen J."/>
            <person name="Villarroel R."/>
            <person name="De Clercq R."/>
            <person name="van Montagu M."/>
            <person name="Rogers J."/>
            <person name="Cronin A."/>
            <person name="Quail M.A."/>
            <person name="Bray-Allen S."/>
            <person name="Clark L."/>
            <person name="Doggett J."/>
            <person name="Hall S."/>
            <person name="Kay M."/>
            <person name="Lennard N."/>
            <person name="McLay K."/>
            <person name="Mayes R."/>
            <person name="Pettett A."/>
            <person name="Rajandream M.A."/>
            <person name="Lyne M."/>
            <person name="Benes V."/>
            <person name="Rechmann S."/>
            <person name="Borkova D."/>
            <person name="Bloecker H."/>
            <person name="Scharfe M."/>
            <person name="Grimm M."/>
            <person name="Loehnert T.-H."/>
            <person name="Dose S."/>
            <person name="de Haan M."/>
            <person name="Maarse A.C."/>
            <person name="Schaefer M."/>
            <person name="Mueller-Auer S."/>
            <person name="Gabel C."/>
            <person name="Fuchs M."/>
            <person name="Fartmann B."/>
            <person name="Granderath K."/>
            <person name="Dauner D."/>
            <person name="Herzl A."/>
            <person name="Neumann S."/>
            <person name="Argiriou A."/>
            <person name="Vitale D."/>
            <person name="Liguori R."/>
            <person name="Piravandi E."/>
            <person name="Massenet O."/>
            <person name="Quigley F."/>
            <person name="Clabauld G."/>
            <person name="Muendlein A."/>
            <person name="Felber R."/>
            <person name="Schnabl S."/>
            <person name="Hiller R."/>
            <person name="Schmidt W."/>
            <person name="Lecharny A."/>
            <person name="Aubourg S."/>
            <person name="Chefdor F."/>
            <person name="Cooke R."/>
            <person name="Berger C."/>
            <person name="Monfort A."/>
            <person name="Casacuberta E."/>
            <person name="Gibbons T."/>
            <person name="Weber N."/>
            <person name="Vandenbol M."/>
            <person name="Bargues M."/>
            <person name="Terol J."/>
            <person name="Torres A."/>
            <person name="Perez-Perez A."/>
            <person name="Purnelle B."/>
            <person name="Bent E."/>
            <person name="Johnson S."/>
            <person name="Tacon D."/>
            <person name="Jesse T."/>
            <person name="Heijnen L."/>
            <person name="Schwarz S."/>
            <person name="Scholler P."/>
            <person name="Heber S."/>
            <person name="Francs P."/>
            <person name="Bielke C."/>
            <person name="Frishman D."/>
            <person name="Haase D."/>
            <person name="Lemcke K."/>
            <person name="Mewes H.-W."/>
            <person name="Stocker S."/>
            <person name="Zaccaria P."/>
            <person name="Bevan M."/>
            <person name="Wilson R.K."/>
            <person name="de la Bastide M."/>
            <person name="Habermann K."/>
            <person name="Parnell L."/>
            <person name="Dedhia N."/>
            <person name="Gnoj L."/>
            <person name="Schutz K."/>
            <person name="Huang E."/>
            <person name="Spiegel L."/>
            <person name="Sekhon M."/>
            <person name="Murray J."/>
            <person name="Sheet P."/>
            <person name="Cordes M."/>
            <person name="Abu-Threideh J."/>
            <person name="Stoneking T."/>
            <person name="Kalicki J."/>
            <person name="Graves T."/>
            <person name="Harmon G."/>
            <person name="Edwards J."/>
            <person name="Latreille P."/>
            <person name="Courtney L."/>
            <person name="Cloud J."/>
            <person name="Abbott A."/>
            <person name="Scott K."/>
            <person name="Johnson D."/>
            <person name="Minx P."/>
            <person name="Bentley D."/>
            <person name="Fulton B."/>
            <person name="Miller N."/>
            <person name="Greco T."/>
            <person name="Kemp K."/>
            <person name="Kramer J."/>
            <person name="Fulton L."/>
            <person name="Mardis E."/>
            <person name="Dante M."/>
            <person name="Pepin K."/>
            <person name="Hillier L.W."/>
            <person name="Nelson J."/>
            <person name="Spieth J."/>
            <person name="Ryan E."/>
            <person name="Andrews S."/>
            <person name="Geisel C."/>
            <person name="Layman D."/>
            <person name="Du H."/>
            <person name="Ali J."/>
            <person name="Berghoff A."/>
            <person name="Jones K."/>
            <person name="Drone K."/>
            <person name="Cotton M."/>
            <person name="Joshu C."/>
            <person name="Antonoiu B."/>
            <person name="Zidanic M."/>
            <person name="Strong C."/>
            <person name="Sun H."/>
            <person name="Lamar B."/>
            <person name="Yordan C."/>
            <person name="Ma P."/>
            <person name="Zhong J."/>
            <person name="Preston R."/>
            <person name="Vil D."/>
            <person name="Shekher M."/>
            <person name="Matero A."/>
            <person name="Shah R."/>
            <person name="Swaby I.K."/>
            <person name="O'Shaughnessy A."/>
            <person name="Rodriguez M."/>
            <person name="Hoffman J."/>
            <person name="Till S."/>
            <person name="Granat S."/>
            <person name="Shohdy N."/>
            <person name="Hasegawa A."/>
            <person name="Hameed A."/>
            <person name="Lodhi M."/>
            <person name="Johnson A."/>
            <person name="Chen E."/>
            <person name="Marra M.A."/>
            <person name="Martienssen R."/>
            <person name="McCombie W.R."/>
        </authorList>
    </citation>
    <scope>NUCLEOTIDE SEQUENCE [LARGE SCALE GENOMIC DNA]</scope>
    <source>
        <strain>cv. Columbia</strain>
    </source>
</reference>
<reference key="3">
    <citation type="journal article" date="2017" name="Plant J.">
        <title>Araport11: a complete reannotation of the Arabidopsis thaliana reference genome.</title>
        <authorList>
            <person name="Cheng C.Y."/>
            <person name="Krishnakumar V."/>
            <person name="Chan A.P."/>
            <person name="Thibaud-Nissen F."/>
            <person name="Schobel S."/>
            <person name="Town C.D."/>
        </authorList>
    </citation>
    <scope>GENOME REANNOTATION</scope>
    <source>
        <strain>cv. Columbia</strain>
    </source>
</reference>
<reference key="4">
    <citation type="submission" date="2005-03" db="EMBL/GenBank/DDBJ databases">
        <title>Large-scale analysis of RIKEN Arabidopsis full-length (RAFL) cDNAs.</title>
        <authorList>
            <person name="Totoki Y."/>
            <person name="Seki M."/>
            <person name="Ishida J."/>
            <person name="Nakajima M."/>
            <person name="Enju A."/>
            <person name="Kamiya A."/>
            <person name="Narusaka M."/>
            <person name="Shin-i T."/>
            <person name="Nakagawa M."/>
            <person name="Sakamoto N."/>
            <person name="Oishi K."/>
            <person name="Kohara Y."/>
            <person name="Kobayashi M."/>
            <person name="Toyoda A."/>
            <person name="Sakaki Y."/>
            <person name="Sakurai T."/>
            <person name="Iida K."/>
            <person name="Akiyama K."/>
            <person name="Satou M."/>
            <person name="Toyoda T."/>
            <person name="Konagaya A."/>
            <person name="Carninci P."/>
            <person name="Kawai J."/>
            <person name="Hayashizaki Y."/>
            <person name="Shinozaki K."/>
        </authorList>
    </citation>
    <scope>NUCLEOTIDE SEQUENCE [LARGE SCALE MRNA]</scope>
    <source>
        <strain>cv. Columbia</strain>
    </source>
</reference>
<reference key="5">
    <citation type="journal article" date="2009" name="Plant Physiol.">
        <title>Functional characterization of a higher plant sphingolipid Delta4-desaturase: defining the role of sphingosine and sphingosine-1-phosphate in Arabidopsis.</title>
        <authorList>
            <person name="Michaelson L.V."/>
            <person name="Zauner S."/>
            <person name="Markham J.E."/>
            <person name="Haslam R.P."/>
            <person name="Desikan R."/>
            <person name="Mugford S."/>
            <person name="Albrecht S."/>
            <person name="Warnecke D."/>
            <person name="Sperling P."/>
            <person name="Heinz E."/>
            <person name="Napier J.A."/>
        </authorList>
    </citation>
    <scope>FUNCTION</scope>
    <scope>TISSUE SPECIFICITY</scope>
    <scope>DISRUPTION PHENOTYPE</scope>
</reference>
<feature type="chain" id="PRO_0000430303" description="Sphingolipid delta(4)-desaturase DES1-like">
    <location>
        <begin position="1"/>
        <end position="332"/>
    </location>
</feature>
<feature type="transmembrane region" description="Helical; Name=1" evidence="1">
    <location>
        <begin position="55"/>
        <end position="75"/>
    </location>
</feature>
<feature type="transmembrane region" description="Helical; Name=2" evidence="1">
    <location>
        <begin position="83"/>
        <end position="103"/>
    </location>
</feature>
<feature type="transmembrane region" description="Helical; Name=3" evidence="1">
    <location>
        <begin position="119"/>
        <end position="139"/>
    </location>
</feature>
<feature type="transmembrane region" description="Helical; Name=4" evidence="1">
    <location>
        <begin position="164"/>
        <end position="184"/>
    </location>
</feature>
<feature type="transmembrane region" description="Helical; Name=5" evidence="1">
    <location>
        <begin position="197"/>
        <end position="217"/>
    </location>
</feature>
<feature type="transmembrane region" description="Helical; Name=6" evidence="1">
    <location>
        <begin position="222"/>
        <end position="242"/>
    </location>
</feature>
<feature type="short sequence motif" description="Histidine box-1" evidence="3">
    <location>
        <begin position="103"/>
        <end position="107"/>
    </location>
</feature>
<feature type="short sequence motif" description="Histidine box-2" evidence="3">
    <location>
        <begin position="140"/>
        <end position="144"/>
    </location>
</feature>
<feature type="short sequence motif" description="Histidine box-3" evidence="3">
    <location>
        <begin position="271"/>
        <end position="275"/>
    </location>
</feature>
<name>DES1L_ARATH</name>
<comment type="function">
    <text evidence="2">Sphingolipid-delta-4-desaturase required for the biosynthesis of delta-4-unsaturated sphingolipids and derivatives. May be required for the biosynthesis of glucosylceramides.</text>
</comment>
<comment type="catalytic activity">
    <reaction evidence="4">
        <text>an N-acylsphinganine + 2 Fe(II)-[cytochrome b5] + O2 + 2 H(+) = an N-acylsphing-4-enine + 2 Fe(III)-[cytochrome b5] + 2 H2O</text>
        <dbReference type="Rhea" id="RHEA:46544"/>
        <dbReference type="Rhea" id="RHEA-COMP:10438"/>
        <dbReference type="Rhea" id="RHEA-COMP:10439"/>
        <dbReference type="ChEBI" id="CHEBI:15377"/>
        <dbReference type="ChEBI" id="CHEBI:15378"/>
        <dbReference type="ChEBI" id="CHEBI:15379"/>
        <dbReference type="ChEBI" id="CHEBI:29033"/>
        <dbReference type="ChEBI" id="CHEBI:29034"/>
        <dbReference type="ChEBI" id="CHEBI:31488"/>
        <dbReference type="ChEBI" id="CHEBI:52639"/>
        <dbReference type="EC" id="1.14.19.17"/>
    </reaction>
</comment>
<comment type="subcellular location">
    <subcellularLocation>
        <location evidence="3">Endoplasmic reticulum membrane</location>
        <topology evidence="3">Multi-pass membrane protein</topology>
    </subcellularLocation>
</comment>
<comment type="tissue specificity">
    <text evidence="2">Specifically expressed in flowers.</text>
</comment>
<comment type="disruption phenotype">
    <text evidence="2">No visible phenotype under normal growth conditions.</text>
</comment>
<comment type="similarity">
    <text evidence="3">Belongs to the fatty acid desaturase type 1 family. DEGS subfamily.</text>
</comment>
<evidence type="ECO:0000255" key="1"/>
<evidence type="ECO:0000269" key="2">
    <source>
    </source>
</evidence>
<evidence type="ECO:0000305" key="3"/>
<evidence type="ECO:0000305" key="4">
    <source>
    </source>
</evidence>
<organism>
    <name type="scientific">Arabidopsis thaliana</name>
    <name type="common">Mouse-ear cress</name>
    <dbReference type="NCBI Taxonomy" id="3702"/>
    <lineage>
        <taxon>Eukaryota</taxon>
        <taxon>Viridiplantae</taxon>
        <taxon>Streptophyta</taxon>
        <taxon>Embryophyta</taxon>
        <taxon>Tracheophyta</taxon>
        <taxon>Spermatophyta</taxon>
        <taxon>Magnoliopsida</taxon>
        <taxon>eudicotyledons</taxon>
        <taxon>Gunneridae</taxon>
        <taxon>Pentapetalae</taxon>
        <taxon>rosids</taxon>
        <taxon>malvids</taxon>
        <taxon>Brassicales</taxon>
        <taxon>Brassicaceae</taxon>
        <taxon>Camelineae</taxon>
        <taxon>Arabidopsis</taxon>
    </lineage>
</organism>
<dbReference type="EC" id="1.14.19.17" evidence="4"/>
<dbReference type="EMBL" id="AF220201">
    <property type="protein sequence ID" value="AAF27915.1"/>
    <property type="molecule type" value="mRNA"/>
</dbReference>
<dbReference type="EMBL" id="AF128393">
    <property type="protein sequence ID" value="AAD17340.1"/>
    <property type="molecule type" value="Genomic_DNA"/>
</dbReference>
<dbReference type="EMBL" id="AL161502">
    <property type="protein sequence ID" value="CAB81035.1"/>
    <property type="molecule type" value="Genomic_DNA"/>
</dbReference>
<dbReference type="EMBL" id="CP002687">
    <property type="protein sequence ID" value="AEE82444.1"/>
    <property type="molecule type" value="Genomic_DNA"/>
</dbReference>
<dbReference type="EMBL" id="AK221700">
    <property type="protein sequence ID" value="BAD95415.1"/>
    <property type="molecule type" value="mRNA"/>
</dbReference>
<dbReference type="PIR" id="A85062">
    <property type="entry name" value="A85062"/>
</dbReference>
<dbReference type="FunCoup" id="Q9ZPH4">
    <property type="interactions" value="1893"/>
</dbReference>
<dbReference type="STRING" id="3702.Q9ZPH4"/>
<dbReference type="iPTMnet" id="Q9ZPH4"/>
<dbReference type="PaxDb" id="3702-AT4G04930.1"/>
<dbReference type="ProteomicsDB" id="224078"/>
<dbReference type="EnsemblPlants" id="AT4G04930.1">
    <property type="protein sequence ID" value="AT4G04930.1"/>
    <property type="gene ID" value="AT4G04930"/>
</dbReference>
<dbReference type="GeneID" id="825832"/>
<dbReference type="Gramene" id="AT4G04930.1">
    <property type="protein sequence ID" value="AT4G04930.1"/>
    <property type="gene ID" value="AT4G04930"/>
</dbReference>
<dbReference type="KEGG" id="ath:AT4G04930"/>
<dbReference type="Araport" id="AT4G04930"/>
<dbReference type="TAIR" id="AT4G04930">
    <property type="gene designation" value="DES-1-LIKE"/>
</dbReference>
<dbReference type="eggNOG" id="KOG2987">
    <property type="taxonomic scope" value="Eukaryota"/>
</dbReference>
<dbReference type="HOGENOM" id="CLU_032156_0_0_1"/>
<dbReference type="InParanoid" id="Q9ZPH4"/>
<dbReference type="OMA" id="GATCNQN"/>
<dbReference type="PhylomeDB" id="Q9ZPH4"/>
<dbReference type="BioCyc" id="ARA:AT4G04930-MONOMER"/>
<dbReference type="BioCyc" id="MetaCyc:AT4G04930-MONOMER"/>
<dbReference type="PRO" id="PR:Q9ZPH4"/>
<dbReference type="Proteomes" id="UP000006548">
    <property type="component" value="Chromosome 4"/>
</dbReference>
<dbReference type="ExpressionAtlas" id="Q9ZPH4">
    <property type="expression patterns" value="baseline and differential"/>
</dbReference>
<dbReference type="GO" id="GO:0005789">
    <property type="term" value="C:endoplasmic reticulum membrane"/>
    <property type="evidence" value="ECO:0007669"/>
    <property type="project" value="UniProtKB-SubCell"/>
</dbReference>
<dbReference type="GO" id="GO:0042284">
    <property type="term" value="F:sphingolipid delta-4 desaturase activity"/>
    <property type="evidence" value="ECO:0000315"/>
    <property type="project" value="TAIR"/>
</dbReference>
<dbReference type="GO" id="GO:0030148">
    <property type="term" value="P:sphingolipid biosynthetic process"/>
    <property type="evidence" value="ECO:0000315"/>
    <property type="project" value="TAIR"/>
</dbReference>
<dbReference type="CDD" id="cd03508">
    <property type="entry name" value="Delta4-sphingolipid-FADS-like"/>
    <property type="match status" value="1"/>
</dbReference>
<dbReference type="InterPro" id="IPR011388">
    <property type="entry name" value="DES1/DES2"/>
</dbReference>
<dbReference type="InterPro" id="IPR005804">
    <property type="entry name" value="FA_desaturase_dom"/>
</dbReference>
<dbReference type="InterPro" id="IPR013866">
    <property type="entry name" value="Sphingolipid_d4-desaturase_N"/>
</dbReference>
<dbReference type="PANTHER" id="PTHR12879">
    <property type="entry name" value="SPHINGOLIPID DELTA 4 DESATURASE/C-4 HYDROXYLASE PROTEIN DES2"/>
    <property type="match status" value="1"/>
</dbReference>
<dbReference type="PANTHER" id="PTHR12879:SF8">
    <property type="entry name" value="SPHINGOLIPID DELTA(4)-DESATURASE DES1"/>
    <property type="match status" value="1"/>
</dbReference>
<dbReference type="Pfam" id="PF00487">
    <property type="entry name" value="FA_desaturase"/>
    <property type="match status" value="1"/>
</dbReference>
<dbReference type="Pfam" id="PF08557">
    <property type="entry name" value="Lipid_DES"/>
    <property type="match status" value="1"/>
</dbReference>
<dbReference type="PIRSF" id="PIRSF017228">
    <property type="entry name" value="Sphnglp_dlt4_des"/>
    <property type="match status" value="1"/>
</dbReference>
<dbReference type="SMART" id="SM01269">
    <property type="entry name" value="Lipid_DES"/>
    <property type="match status" value="1"/>
</dbReference>
<dbReference type="PROSITE" id="PS00142">
    <property type="entry name" value="ZINC_PROTEASE"/>
    <property type="match status" value="1"/>
</dbReference>
<keyword id="KW-0256">Endoplasmic reticulum</keyword>
<keyword id="KW-0443">Lipid metabolism</keyword>
<keyword id="KW-0472">Membrane</keyword>
<keyword id="KW-0560">Oxidoreductase</keyword>
<keyword id="KW-1185">Reference proteome</keyword>
<keyword id="KW-0746">Sphingolipid metabolism</keyword>
<keyword id="KW-0812">Transmembrane</keyword>
<keyword id="KW-1133">Transmembrane helix</keyword>
<sequence>MGKGGREKISSNEEEREGVMATDFFWSYTDEPHASRRRQILSCYPQIRQLFGPDPWAFLKITLVVILQLSTAAILHNSGWLKILSIAYFFGSFLNHNLFLAIHELSHNLAFSTPVYNRCLGIFANLPIGVPMSVTFQKYHLEHHRFQGVDGIDMDVPTYTEAHLVTNIFAKTIWVFLQLFFYALRPIFIKPKPPGYWEFINFLIQIVLDVSVVLFFGWRSFAYLILSTFVGGGMHPMAGHFISEHYVFNPNQETYSYYGPLNLLTWSVGYHNEHHDFPRIPGNKLHLVKEIAGEYYEGLESYKSWSQVIYMYIMDTTVGPYSRMKRKLSKSD</sequence>